<comment type="function">
    <text evidence="6">Aerial growth, conidiation, and dispersal of filamentous fungi in the environment rely upon a capability of their secreting small amphipathic proteins called hydrophobins (HPBs) with low sequence identity. Class I can self-assemble into an outermost layer of rodlet bundles on aerial cell surfaces, conferring cellular hydrophobicity that supports fungal growth, development and dispersal; whereas Class II form highly ordered films at water-air interfaces through intermolecular interactions but contribute nothing to the rodlet structure.</text>
</comment>
<comment type="subunit">
    <text evidence="1">Self-assembles to form functional amyloid fibrils called rodlets. Self-assembly into fibrillar rodlets occurs spontaneously at hydrophobic:hydrophilic interfaces and the rodlets further associate laterally to form amphipathic monolayers.</text>
</comment>
<comment type="subcellular location">
    <subcellularLocation>
        <location evidence="4">Secreted</location>
    </subcellularLocation>
    <subcellularLocation>
        <location evidence="4">Secreted</location>
        <location evidence="4">Cell wall</location>
    </subcellularLocation>
</comment>
<comment type="developmental stage">
    <text evidence="4">Expressed only at the vegetative stage.</text>
</comment>
<comment type="induction">
    <text evidence="4">Expression is increased by carbon source limitation.</text>
</comment>
<comment type="similarity">
    <text evidence="6">Belongs to the fungal hydrophobin family.</text>
</comment>
<feature type="signal peptide" evidence="2">
    <location>
        <begin position="1"/>
        <end position="19"/>
    </location>
</feature>
<feature type="chain" id="PRO_5013988461" description="Class I hydrophobin 1">
    <location>
        <begin position="20"/>
        <end position="116"/>
    </location>
</feature>
<feature type="glycosylation site" description="N-linked (GlcNAc...) asparagine" evidence="3">
    <location>
        <position position="44"/>
    </location>
</feature>
<feature type="glycosylation site" description="N-linked (GlcNAc...) asparagine" evidence="3">
    <location>
        <position position="100"/>
    </location>
</feature>
<feature type="disulfide bond" evidence="1">
    <location>
        <begin position="35"/>
        <end position="95"/>
    </location>
</feature>
<feature type="disulfide bond" evidence="1">
    <location>
        <begin position="42"/>
        <end position="89"/>
    </location>
</feature>
<feature type="disulfide bond" evidence="1">
    <location>
        <begin position="43"/>
        <end position="76"/>
    </location>
</feature>
<feature type="disulfide bond" evidence="1">
    <location>
        <begin position="96"/>
        <end position="109"/>
    </location>
</feature>
<evidence type="ECO:0000250" key="1">
    <source>
        <dbReference type="UniProtKB" id="Q04571"/>
    </source>
</evidence>
<evidence type="ECO:0000255" key="2"/>
<evidence type="ECO:0000255" key="3">
    <source>
        <dbReference type="PROSITE-ProRule" id="PRU00498"/>
    </source>
</evidence>
<evidence type="ECO:0000269" key="4">
    <source>
    </source>
</evidence>
<evidence type="ECO:0000303" key="5">
    <source>
    </source>
</evidence>
<evidence type="ECO:0000305" key="6"/>
<proteinExistence type="evidence at transcript level"/>
<reference key="1">
    <citation type="journal article" date="2014" name="Proc. Natl. Acad. Sci. U.S.A.">
        <title>Extensive sampling of basidiomycete genomes demonstrates inadequacy of the white-rot/brown-rot paradigm for wood decay fungi.</title>
        <authorList>
            <person name="Riley R."/>
            <person name="Salamov A.A."/>
            <person name="Brown D.W."/>
            <person name="Nagy L.G."/>
            <person name="Floudas D."/>
            <person name="Held B.W."/>
            <person name="Levasseur A."/>
            <person name="Lombard V."/>
            <person name="Morin E."/>
            <person name="Otillar R."/>
            <person name="Lindquist E.A."/>
            <person name="Sun H."/>
            <person name="LaButti K.M."/>
            <person name="Schmutz J."/>
            <person name="Jabbour D."/>
            <person name="Luo H."/>
            <person name="Baker S.E."/>
            <person name="Pisabarro A.G."/>
            <person name="Walton J.D."/>
            <person name="Blanchette R.A."/>
            <person name="Henrissat B."/>
            <person name="Martin F."/>
            <person name="Cullen D."/>
            <person name="Hibbett D.S."/>
            <person name="Grigoriev I.V."/>
        </authorList>
    </citation>
    <scope>NUCLEOTIDE SEQUENCE [LARGE SCALE GENOMIC DNA]</scope>
    <source>
        <strain>PC15</strain>
    </source>
</reference>
<reference key="2">
    <citation type="journal article" date="2002" name="Appl. Environ. Microbiol.">
        <title>Differentially regulated, vegetative-mycelium-specific hydrophobins of the edible basidiomycete Pleurotus ostreatus.</title>
        <authorList>
            <person name="Penas M.M."/>
            <person name="Rust B."/>
            <person name="Larraya L.M."/>
            <person name="Ramirez L."/>
            <person name="Pisabarro A.G."/>
        </authorList>
    </citation>
    <scope>DEVELOPMENTAL STAGE</scope>
    <scope>INDUCTION</scope>
    <scope>SUBCELLULAR LOCATION</scope>
</reference>
<keyword id="KW-0134">Cell wall</keyword>
<keyword id="KW-1015">Disulfide bond</keyword>
<keyword id="KW-0325">Glycoprotein</keyword>
<keyword id="KW-1185">Reference proteome</keyword>
<keyword id="KW-0964">Secreted</keyword>
<keyword id="KW-0732">Signal</keyword>
<name>VMH1_PLEO1</name>
<sequence length="116" mass="11805">MLFKQAILVATTLTTLAVATPVVDVRRRTDPASSCSTGTLNCCNSSGTVEDKTIAGLLGILNIVVSDITALVGITCTPITVVGAGGTSCTSQTLCCDNNNFSGLITLGCIPININL</sequence>
<dbReference type="EMBL" id="KL198004">
    <property type="protein sequence ID" value="KDQ34039.1"/>
    <property type="molecule type" value="Genomic_DNA"/>
</dbReference>
<dbReference type="STRING" id="1137138.A0A067P1K6"/>
<dbReference type="VEuPathDB" id="FungiDB:PLEOSDRAFT_1061626"/>
<dbReference type="HOGENOM" id="CLU_105134_2_0_1"/>
<dbReference type="InParanoid" id="A0A067P1K6"/>
<dbReference type="OrthoDB" id="138913at5338"/>
<dbReference type="Proteomes" id="UP000027073">
    <property type="component" value="Unassembled WGS sequence"/>
</dbReference>
<dbReference type="GO" id="GO:0005576">
    <property type="term" value="C:extracellular region"/>
    <property type="evidence" value="ECO:0007669"/>
    <property type="project" value="UniProtKB-KW"/>
</dbReference>
<dbReference type="GO" id="GO:0009277">
    <property type="term" value="C:fungal-type cell wall"/>
    <property type="evidence" value="ECO:0007669"/>
    <property type="project" value="InterPro"/>
</dbReference>
<dbReference type="GO" id="GO:0005199">
    <property type="term" value="F:structural constituent of cell wall"/>
    <property type="evidence" value="ECO:0007669"/>
    <property type="project" value="InterPro"/>
</dbReference>
<dbReference type="CDD" id="cd23507">
    <property type="entry name" value="hydrophobin_I"/>
    <property type="match status" value="1"/>
</dbReference>
<dbReference type="InterPro" id="IPR001338">
    <property type="entry name" value="Hydrophobin"/>
</dbReference>
<dbReference type="Pfam" id="PF01185">
    <property type="entry name" value="Hydrophobin"/>
    <property type="match status" value="1"/>
</dbReference>
<dbReference type="SMART" id="SM00075">
    <property type="entry name" value="HYDRO"/>
    <property type="match status" value="1"/>
</dbReference>
<accession>A0A067P1K6</accession>
<protein>
    <recommendedName>
        <fullName evidence="5">Class I hydrophobin 1</fullName>
    </recommendedName>
</protein>
<organism>
    <name type="scientific">Pleurotus ostreatus (strain PC15)</name>
    <name type="common">Oyster mushroom</name>
    <dbReference type="NCBI Taxonomy" id="1137138"/>
    <lineage>
        <taxon>Eukaryota</taxon>
        <taxon>Fungi</taxon>
        <taxon>Dikarya</taxon>
        <taxon>Basidiomycota</taxon>
        <taxon>Agaricomycotina</taxon>
        <taxon>Agaricomycetes</taxon>
        <taxon>Agaricomycetidae</taxon>
        <taxon>Agaricales</taxon>
        <taxon>Pleurotineae</taxon>
        <taxon>Pleurotaceae</taxon>
        <taxon>Pleurotus</taxon>
    </lineage>
</organism>
<gene>
    <name evidence="5" type="primary">vmh1</name>
    <name type="ORF">PLEOSDRAFT_1061626</name>
</gene>